<protein>
    <recommendedName>
        <fullName evidence="1">Imidazole glycerol phosphate synthase subunit HisF</fullName>
        <ecNumber evidence="1">4.3.2.10</ecNumber>
    </recommendedName>
    <alternativeName>
        <fullName evidence="1">IGP synthase cyclase subunit</fullName>
    </alternativeName>
    <alternativeName>
        <fullName evidence="1">IGP synthase subunit HisF</fullName>
    </alternativeName>
    <alternativeName>
        <fullName evidence="1">ImGP synthase subunit HisF</fullName>
        <shortName evidence="1">IGPS subunit HisF</shortName>
    </alternativeName>
</protein>
<sequence length="261" mass="26649">MKPAGDVATRVIPCLDVDGGRVVKGVNFANLRDAGDPVELAAAYDAEGADELTFLDVTASSSGRATMLDVVRRTAEQVFIPLTVGGGVRSVADVDALLRAGADKVSVNTAAIARPELLSELSRQFGSQCIVLSVDARTVPEGSQPTPSGWEVTTHGGRRGTGIDAVEWAVQGAELGVGEILLNSMDADGTKAGFDLEMLRAVRGAVTVPVIASGGAGAVEHFAPAVAAGADAVLAASVFHFGELTIGQVKAAMKAEGITVR</sequence>
<comment type="function">
    <text evidence="1">IGPS catalyzes the conversion of PRFAR and glutamine to IGP, AICAR and glutamate. The HisF subunit catalyzes the cyclization activity that produces IGP and AICAR from PRFAR using the ammonia provided by the HisH subunit.</text>
</comment>
<comment type="catalytic activity">
    <reaction evidence="1">
        <text>5-[(5-phospho-1-deoxy-D-ribulos-1-ylimino)methylamino]-1-(5-phospho-beta-D-ribosyl)imidazole-4-carboxamide + L-glutamine = D-erythro-1-(imidazol-4-yl)glycerol 3-phosphate + 5-amino-1-(5-phospho-beta-D-ribosyl)imidazole-4-carboxamide + L-glutamate + H(+)</text>
        <dbReference type="Rhea" id="RHEA:24793"/>
        <dbReference type="ChEBI" id="CHEBI:15378"/>
        <dbReference type="ChEBI" id="CHEBI:29985"/>
        <dbReference type="ChEBI" id="CHEBI:58278"/>
        <dbReference type="ChEBI" id="CHEBI:58359"/>
        <dbReference type="ChEBI" id="CHEBI:58475"/>
        <dbReference type="ChEBI" id="CHEBI:58525"/>
        <dbReference type="EC" id="4.3.2.10"/>
    </reaction>
</comment>
<comment type="pathway">
    <text evidence="1">Amino-acid biosynthesis; L-histidine biosynthesis; L-histidine from 5-phospho-alpha-D-ribose 1-diphosphate: step 5/9.</text>
</comment>
<comment type="subunit">
    <text evidence="1">Heterodimer of HisH and HisF.</text>
</comment>
<comment type="subcellular location">
    <subcellularLocation>
        <location evidence="1">Cytoplasm</location>
    </subcellularLocation>
</comment>
<comment type="similarity">
    <text evidence="1">Belongs to the HisA/HisF family.</text>
</comment>
<evidence type="ECO:0000255" key="1">
    <source>
        <dbReference type="HAMAP-Rule" id="MF_01013"/>
    </source>
</evidence>
<reference key="1">
    <citation type="submission" date="2006-12" db="EMBL/GenBank/DDBJ databases">
        <title>Complete sequence of Mycobacterium vanbaalenii PYR-1.</title>
        <authorList>
            <consortium name="US DOE Joint Genome Institute"/>
            <person name="Copeland A."/>
            <person name="Lucas S."/>
            <person name="Lapidus A."/>
            <person name="Barry K."/>
            <person name="Detter J.C."/>
            <person name="Glavina del Rio T."/>
            <person name="Hammon N."/>
            <person name="Israni S."/>
            <person name="Dalin E."/>
            <person name="Tice H."/>
            <person name="Pitluck S."/>
            <person name="Singan V."/>
            <person name="Schmutz J."/>
            <person name="Larimer F."/>
            <person name="Land M."/>
            <person name="Hauser L."/>
            <person name="Kyrpides N."/>
            <person name="Anderson I.J."/>
            <person name="Miller C."/>
            <person name="Richardson P."/>
        </authorList>
    </citation>
    <scope>NUCLEOTIDE SEQUENCE [LARGE SCALE GENOMIC DNA]</scope>
    <source>
        <strain>DSM 7251 / JCM 13017 / BCRC 16820 / KCTC 9966 / NRRL B-24157 / PYR-1</strain>
    </source>
</reference>
<feature type="chain" id="PRO_1000063100" description="Imidazole glycerol phosphate synthase subunit HisF">
    <location>
        <begin position="1"/>
        <end position="261"/>
    </location>
</feature>
<feature type="active site" evidence="1">
    <location>
        <position position="16"/>
    </location>
</feature>
<feature type="active site" evidence="1">
    <location>
        <position position="135"/>
    </location>
</feature>
<proteinExistence type="inferred from homology"/>
<name>HIS6_MYCVP</name>
<dbReference type="EC" id="4.3.2.10" evidence="1"/>
<dbReference type="EMBL" id="CP000511">
    <property type="protein sequence ID" value="ABM13617.1"/>
    <property type="molecule type" value="Genomic_DNA"/>
</dbReference>
<dbReference type="RefSeq" id="WP_011780025.1">
    <property type="nucleotide sequence ID" value="NZ_JACKSD010000326.1"/>
</dbReference>
<dbReference type="SMR" id="A1T8W7"/>
<dbReference type="STRING" id="350058.Mvan_2810"/>
<dbReference type="KEGG" id="mva:Mvan_2810"/>
<dbReference type="eggNOG" id="COG0107">
    <property type="taxonomic scope" value="Bacteria"/>
</dbReference>
<dbReference type="HOGENOM" id="CLU_048577_4_0_11"/>
<dbReference type="UniPathway" id="UPA00031">
    <property type="reaction ID" value="UER00010"/>
</dbReference>
<dbReference type="Proteomes" id="UP000009159">
    <property type="component" value="Chromosome"/>
</dbReference>
<dbReference type="GO" id="GO:0005737">
    <property type="term" value="C:cytoplasm"/>
    <property type="evidence" value="ECO:0007669"/>
    <property type="project" value="UniProtKB-SubCell"/>
</dbReference>
<dbReference type="GO" id="GO:0000107">
    <property type="term" value="F:imidazoleglycerol-phosphate synthase activity"/>
    <property type="evidence" value="ECO:0007669"/>
    <property type="project" value="UniProtKB-UniRule"/>
</dbReference>
<dbReference type="GO" id="GO:0016829">
    <property type="term" value="F:lyase activity"/>
    <property type="evidence" value="ECO:0007669"/>
    <property type="project" value="UniProtKB-KW"/>
</dbReference>
<dbReference type="GO" id="GO:0000105">
    <property type="term" value="P:L-histidine biosynthetic process"/>
    <property type="evidence" value="ECO:0007669"/>
    <property type="project" value="UniProtKB-UniRule"/>
</dbReference>
<dbReference type="CDD" id="cd04731">
    <property type="entry name" value="HisF"/>
    <property type="match status" value="1"/>
</dbReference>
<dbReference type="FunFam" id="3.20.20.70:FF:000006">
    <property type="entry name" value="Imidazole glycerol phosphate synthase subunit HisF"/>
    <property type="match status" value="1"/>
</dbReference>
<dbReference type="Gene3D" id="3.20.20.70">
    <property type="entry name" value="Aldolase class I"/>
    <property type="match status" value="1"/>
</dbReference>
<dbReference type="HAMAP" id="MF_01013">
    <property type="entry name" value="HisF"/>
    <property type="match status" value="1"/>
</dbReference>
<dbReference type="InterPro" id="IPR013785">
    <property type="entry name" value="Aldolase_TIM"/>
</dbReference>
<dbReference type="InterPro" id="IPR006062">
    <property type="entry name" value="His_biosynth"/>
</dbReference>
<dbReference type="InterPro" id="IPR004651">
    <property type="entry name" value="HisF"/>
</dbReference>
<dbReference type="InterPro" id="IPR050064">
    <property type="entry name" value="IGPS_HisA/HisF"/>
</dbReference>
<dbReference type="InterPro" id="IPR011060">
    <property type="entry name" value="RibuloseP-bd_barrel"/>
</dbReference>
<dbReference type="NCBIfam" id="TIGR00735">
    <property type="entry name" value="hisF"/>
    <property type="match status" value="1"/>
</dbReference>
<dbReference type="PANTHER" id="PTHR21235:SF2">
    <property type="entry name" value="IMIDAZOLE GLYCEROL PHOSPHATE SYNTHASE HISHF"/>
    <property type="match status" value="1"/>
</dbReference>
<dbReference type="PANTHER" id="PTHR21235">
    <property type="entry name" value="IMIDAZOLE GLYCEROL PHOSPHATE SYNTHASE SUBUNIT HISF/H IGP SYNTHASE SUBUNIT HISF/H"/>
    <property type="match status" value="1"/>
</dbReference>
<dbReference type="Pfam" id="PF00977">
    <property type="entry name" value="His_biosynth"/>
    <property type="match status" value="1"/>
</dbReference>
<dbReference type="SUPFAM" id="SSF51366">
    <property type="entry name" value="Ribulose-phoshate binding barrel"/>
    <property type="match status" value="1"/>
</dbReference>
<gene>
    <name evidence="1" type="primary">hisF</name>
    <name type="ordered locus">Mvan_2810</name>
</gene>
<keyword id="KW-0028">Amino-acid biosynthesis</keyword>
<keyword id="KW-0963">Cytoplasm</keyword>
<keyword id="KW-0368">Histidine biosynthesis</keyword>
<keyword id="KW-0456">Lyase</keyword>
<organism>
    <name type="scientific">Mycolicibacterium vanbaalenii (strain DSM 7251 / JCM 13017 / BCRC 16820 / KCTC 9966 / NRRL B-24157 / PYR-1)</name>
    <name type="common">Mycobacterium vanbaalenii</name>
    <dbReference type="NCBI Taxonomy" id="350058"/>
    <lineage>
        <taxon>Bacteria</taxon>
        <taxon>Bacillati</taxon>
        <taxon>Actinomycetota</taxon>
        <taxon>Actinomycetes</taxon>
        <taxon>Mycobacteriales</taxon>
        <taxon>Mycobacteriaceae</taxon>
        <taxon>Mycolicibacterium</taxon>
    </lineage>
</organism>
<accession>A1T8W7</accession>